<accession>P43379</accession>
<dbReference type="EC" id="2.4.1.19"/>
<dbReference type="EMBL" id="X78145">
    <property type="protein sequence ID" value="CAA55023.1"/>
    <property type="molecule type" value="Genomic_DNA"/>
</dbReference>
<dbReference type="PIR" id="A58800">
    <property type="entry name" value="A58800"/>
</dbReference>
<dbReference type="PDB" id="1CDG">
    <property type="method" value="X-ray"/>
    <property type="resolution" value="2.00 A"/>
    <property type="chains" value="A=28-713"/>
</dbReference>
<dbReference type="PDB" id="1CGV">
    <property type="method" value="X-ray"/>
    <property type="resolution" value="2.50 A"/>
    <property type="chains" value="A=28-713"/>
</dbReference>
<dbReference type="PDB" id="1CGW">
    <property type="method" value="X-ray"/>
    <property type="resolution" value="2.50 A"/>
    <property type="chains" value="A=28-713"/>
</dbReference>
<dbReference type="PDB" id="1CGX">
    <property type="method" value="X-ray"/>
    <property type="resolution" value="2.50 A"/>
    <property type="chains" value="A=28-713"/>
</dbReference>
<dbReference type="PDB" id="1CGY">
    <property type="method" value="X-ray"/>
    <property type="resolution" value="2.50 A"/>
    <property type="chains" value="A=28-713"/>
</dbReference>
<dbReference type="PDB" id="1CXE">
    <property type="method" value="X-ray"/>
    <property type="resolution" value="2.10 A"/>
    <property type="chains" value="A=28-713"/>
</dbReference>
<dbReference type="PDB" id="1CXF">
    <property type="method" value="X-ray"/>
    <property type="resolution" value="2.10 A"/>
    <property type="chains" value="A=28-713"/>
</dbReference>
<dbReference type="PDB" id="1CXH">
    <property type="method" value="X-ray"/>
    <property type="resolution" value="2.41 A"/>
    <property type="chains" value="A=28-713"/>
</dbReference>
<dbReference type="PDB" id="1CXI">
    <property type="method" value="X-ray"/>
    <property type="resolution" value="2.20 A"/>
    <property type="chains" value="A=28-713"/>
</dbReference>
<dbReference type="PDB" id="1CXK">
    <property type="method" value="X-ray"/>
    <property type="resolution" value="2.09 A"/>
    <property type="chains" value="A=28-713"/>
</dbReference>
<dbReference type="PDB" id="1CXL">
    <property type="method" value="X-ray"/>
    <property type="resolution" value="1.81 A"/>
    <property type="chains" value="A=28-713"/>
</dbReference>
<dbReference type="PDB" id="1D3C">
    <property type="method" value="X-ray"/>
    <property type="resolution" value="1.78 A"/>
    <property type="chains" value="A=28-713"/>
</dbReference>
<dbReference type="PDB" id="1DTU">
    <property type="method" value="X-ray"/>
    <property type="resolution" value="2.40 A"/>
    <property type="chains" value="A=28-713"/>
</dbReference>
<dbReference type="PDB" id="1EO5">
    <property type="method" value="X-ray"/>
    <property type="resolution" value="2.00 A"/>
    <property type="chains" value="A=28-713"/>
</dbReference>
<dbReference type="PDB" id="1EO7">
    <property type="method" value="X-ray"/>
    <property type="resolution" value="2.48 A"/>
    <property type="chains" value="A=28-713"/>
</dbReference>
<dbReference type="PDB" id="1KCK">
    <property type="method" value="X-ray"/>
    <property type="resolution" value="2.43 A"/>
    <property type="chains" value="A=28-713"/>
</dbReference>
<dbReference type="PDB" id="1KCL">
    <property type="method" value="X-ray"/>
    <property type="resolution" value="1.94 A"/>
    <property type="chains" value="A=28-713"/>
</dbReference>
<dbReference type="PDB" id="1OT1">
    <property type="method" value="X-ray"/>
    <property type="resolution" value="2.00 A"/>
    <property type="chains" value="A=28-713"/>
</dbReference>
<dbReference type="PDB" id="1OT2">
    <property type="method" value="X-ray"/>
    <property type="resolution" value="2.10 A"/>
    <property type="chains" value="A=28-713"/>
</dbReference>
<dbReference type="PDB" id="1PEZ">
    <property type="method" value="X-ray"/>
    <property type="resolution" value="2.32 A"/>
    <property type="chains" value="A=28-713"/>
</dbReference>
<dbReference type="PDB" id="1PJ9">
    <property type="method" value="X-ray"/>
    <property type="resolution" value="2.00 A"/>
    <property type="chains" value="A=28-713"/>
</dbReference>
<dbReference type="PDB" id="1TCM">
    <property type="method" value="X-ray"/>
    <property type="resolution" value="2.20 A"/>
    <property type="chains" value="A/B=28-713"/>
</dbReference>
<dbReference type="PDB" id="2CXG">
    <property type="method" value="X-ray"/>
    <property type="resolution" value="2.50 A"/>
    <property type="chains" value="A=28-713"/>
</dbReference>
<dbReference type="PDB" id="2DIJ">
    <property type="method" value="X-ray"/>
    <property type="resolution" value="2.60 A"/>
    <property type="chains" value="A=28-713"/>
</dbReference>
<dbReference type="PDBsum" id="1CDG"/>
<dbReference type="PDBsum" id="1CGV"/>
<dbReference type="PDBsum" id="1CGW"/>
<dbReference type="PDBsum" id="1CGX"/>
<dbReference type="PDBsum" id="1CGY"/>
<dbReference type="PDBsum" id="1CXE"/>
<dbReference type="PDBsum" id="1CXF"/>
<dbReference type="PDBsum" id="1CXH"/>
<dbReference type="PDBsum" id="1CXI"/>
<dbReference type="PDBsum" id="1CXK"/>
<dbReference type="PDBsum" id="1CXL"/>
<dbReference type="PDBsum" id="1D3C"/>
<dbReference type="PDBsum" id="1DTU"/>
<dbReference type="PDBsum" id="1EO5"/>
<dbReference type="PDBsum" id="1EO7"/>
<dbReference type="PDBsum" id="1KCK"/>
<dbReference type="PDBsum" id="1KCL"/>
<dbReference type="PDBsum" id="1OT1"/>
<dbReference type="PDBsum" id="1OT2"/>
<dbReference type="PDBsum" id="1PEZ"/>
<dbReference type="PDBsum" id="1PJ9"/>
<dbReference type="PDBsum" id="1TCM"/>
<dbReference type="PDBsum" id="2CXG"/>
<dbReference type="PDBsum" id="2DIJ"/>
<dbReference type="SMR" id="P43379"/>
<dbReference type="CAZy" id="CBM20">
    <property type="family name" value="Carbohydrate-Binding Module Family 20"/>
</dbReference>
<dbReference type="CAZy" id="GH13">
    <property type="family name" value="Glycoside Hydrolase Family 13"/>
</dbReference>
<dbReference type="BRENDA" id="2.4.1.19">
    <property type="organism ID" value="649"/>
</dbReference>
<dbReference type="SABIO-RK" id="P43379"/>
<dbReference type="EvolutionaryTrace" id="P43379"/>
<dbReference type="GO" id="GO:0005576">
    <property type="term" value="C:extracellular region"/>
    <property type="evidence" value="ECO:0007669"/>
    <property type="project" value="UniProtKB-SubCell"/>
</dbReference>
<dbReference type="GO" id="GO:0004556">
    <property type="term" value="F:alpha-amylase activity"/>
    <property type="evidence" value="ECO:0007669"/>
    <property type="project" value="InterPro"/>
</dbReference>
<dbReference type="GO" id="GO:0043895">
    <property type="term" value="F:cyclomaltodextrin glucanotransferase activity"/>
    <property type="evidence" value="ECO:0007669"/>
    <property type="project" value="UniProtKB-EC"/>
</dbReference>
<dbReference type="GO" id="GO:0046872">
    <property type="term" value="F:metal ion binding"/>
    <property type="evidence" value="ECO:0007669"/>
    <property type="project" value="UniProtKB-KW"/>
</dbReference>
<dbReference type="GO" id="GO:2001070">
    <property type="term" value="F:starch binding"/>
    <property type="evidence" value="ECO:0007669"/>
    <property type="project" value="InterPro"/>
</dbReference>
<dbReference type="GO" id="GO:0005975">
    <property type="term" value="P:carbohydrate metabolic process"/>
    <property type="evidence" value="ECO:0007669"/>
    <property type="project" value="InterPro"/>
</dbReference>
<dbReference type="CDD" id="cd11320">
    <property type="entry name" value="AmyAc_AmyMalt_CGTase_like"/>
    <property type="match status" value="1"/>
</dbReference>
<dbReference type="CDD" id="cd05807">
    <property type="entry name" value="CBM20_CGTase"/>
    <property type="match status" value="1"/>
</dbReference>
<dbReference type="CDD" id="cd00604">
    <property type="entry name" value="IPT_CGTD"/>
    <property type="match status" value="1"/>
</dbReference>
<dbReference type="Gene3D" id="3.20.20.80">
    <property type="entry name" value="Glycosidases"/>
    <property type="match status" value="1"/>
</dbReference>
<dbReference type="Gene3D" id="2.60.40.1180">
    <property type="entry name" value="Golgi alpha-mannosidase II"/>
    <property type="match status" value="1"/>
</dbReference>
<dbReference type="Gene3D" id="2.60.40.10">
    <property type="entry name" value="Immunoglobulins"/>
    <property type="match status" value="2"/>
</dbReference>
<dbReference type="InterPro" id="IPR006048">
    <property type="entry name" value="A-amylase/branching_C"/>
</dbReference>
<dbReference type="InterPro" id="IPR031319">
    <property type="entry name" value="A-amylase_C"/>
</dbReference>
<dbReference type="InterPro" id="IPR006046">
    <property type="entry name" value="Alpha_amylase"/>
</dbReference>
<dbReference type="InterPro" id="IPR013784">
    <property type="entry name" value="Carb-bd-like_fold"/>
</dbReference>
<dbReference type="InterPro" id="IPR002044">
    <property type="entry name" value="CBM20"/>
</dbReference>
<dbReference type="InterPro" id="IPR006047">
    <property type="entry name" value="Glyco_hydro_13_cat_dom"/>
</dbReference>
<dbReference type="InterPro" id="IPR013780">
    <property type="entry name" value="Glyco_hydro_b"/>
</dbReference>
<dbReference type="InterPro" id="IPR017853">
    <property type="entry name" value="Glycoside_hydrolase_SF"/>
</dbReference>
<dbReference type="InterPro" id="IPR013783">
    <property type="entry name" value="Ig-like_fold"/>
</dbReference>
<dbReference type="InterPro" id="IPR014756">
    <property type="entry name" value="Ig_E-set"/>
</dbReference>
<dbReference type="InterPro" id="IPR002909">
    <property type="entry name" value="IPT_dom"/>
</dbReference>
<dbReference type="PANTHER" id="PTHR10357:SF215">
    <property type="entry name" value="ALPHA-AMYLASE 1"/>
    <property type="match status" value="1"/>
</dbReference>
<dbReference type="PANTHER" id="PTHR10357">
    <property type="entry name" value="ALPHA-AMYLASE FAMILY MEMBER"/>
    <property type="match status" value="1"/>
</dbReference>
<dbReference type="Pfam" id="PF00128">
    <property type="entry name" value="Alpha-amylase"/>
    <property type="match status" value="1"/>
</dbReference>
<dbReference type="Pfam" id="PF02806">
    <property type="entry name" value="Alpha-amylase_C"/>
    <property type="match status" value="1"/>
</dbReference>
<dbReference type="Pfam" id="PF00686">
    <property type="entry name" value="CBM_20"/>
    <property type="match status" value="1"/>
</dbReference>
<dbReference type="Pfam" id="PF01833">
    <property type="entry name" value="TIG"/>
    <property type="match status" value="1"/>
</dbReference>
<dbReference type="PRINTS" id="PR00110">
    <property type="entry name" value="ALPHAAMYLASE"/>
</dbReference>
<dbReference type="SMART" id="SM00642">
    <property type="entry name" value="Aamy"/>
    <property type="match status" value="1"/>
</dbReference>
<dbReference type="SMART" id="SM00632">
    <property type="entry name" value="Aamy_C"/>
    <property type="match status" value="1"/>
</dbReference>
<dbReference type="SMART" id="SM01065">
    <property type="entry name" value="CBM_2"/>
    <property type="match status" value="1"/>
</dbReference>
<dbReference type="SUPFAM" id="SSF51445">
    <property type="entry name" value="(Trans)glycosidases"/>
    <property type="match status" value="1"/>
</dbReference>
<dbReference type="SUPFAM" id="SSF81296">
    <property type="entry name" value="E set domains"/>
    <property type="match status" value="1"/>
</dbReference>
<dbReference type="SUPFAM" id="SSF51011">
    <property type="entry name" value="Glycosyl hydrolase domain"/>
    <property type="match status" value="1"/>
</dbReference>
<dbReference type="SUPFAM" id="SSF49452">
    <property type="entry name" value="Starch-binding domain-like"/>
    <property type="match status" value="1"/>
</dbReference>
<dbReference type="PROSITE" id="PS51166">
    <property type="entry name" value="CBM20"/>
    <property type="match status" value="1"/>
</dbReference>
<sequence length="713" mass="77309">MKKFLKSTAALALGLSLTFGLFSPAQAAPDTSVSNKQNFSTDVIYQIFTDRFSDGNPANNPTGAAFDGTCTNLRLYCGGDWQGIINKINDGYLTGMGVTAIWISQPVENIYSIINYSGVNNTAYHGYWARDFKKTNPAYGTIADFQNLIAAAHAKNIKVIIDFAPNHTSPASSDQPSFAENGRLYDNGTLLGGYTNDTQNLFHHNGGTDFSTTENGIYKNLYDLADLNHNNSTVDVYLKDAIKMWLDLGIDGIRMDAVKHMPFGWQKSFMAAVNNYKPVFTFGEWFLGVNEVSPENHKFANESGMSLLDFRFAQKVRQVFRDNTDNMYGLKAMLEGSAADYAQVDDQVTFIDNHDMERFHASNANRRKLEQALAFTLTSRGVPAIYYGTEQYMSGGTDPDNRARIPSFSTSTTAYQVIQKLAPLRKCNPAIAYGSTQERWINNDVLIYERKFGSNVAVVAVNRNLNAPASISGLVTSLPQGSYNDVLGGLLNGNTLSVGSGGAASNFTLAAGGTAVWQYTAATATPTIGHVGPMMAKPGVTITIDGRGFGSSKGTVYFGTTAVSGADITSWEDTQIKVKIPAVAGGNYNIKVANAAGTASNVYDNFEVLSGDQVSVRFVVNNATTALGQNVYLTGSVSELGNWDPAKAIGPMYNQVVYQYPNWYYDVSVPAGKTIEFKFLKKQGSTVTWEGGSNHTFTAPSSGTATINVNWQP</sequence>
<proteinExistence type="evidence at protein level"/>
<organism>
    <name type="scientific">Niallia circulans</name>
    <name type="common">Bacillus circulans</name>
    <dbReference type="NCBI Taxonomy" id="1397"/>
    <lineage>
        <taxon>Bacteria</taxon>
        <taxon>Bacillati</taxon>
        <taxon>Bacillota</taxon>
        <taxon>Bacilli</taxon>
        <taxon>Bacillales</taxon>
        <taxon>Bacillaceae</taxon>
        <taxon>Niallia</taxon>
    </lineage>
</organism>
<name>CDGT2_NIACI</name>
<keyword id="KW-0002">3D-structure</keyword>
<keyword id="KW-0106">Calcium</keyword>
<keyword id="KW-0903">Direct protein sequencing</keyword>
<keyword id="KW-1015">Disulfide bond</keyword>
<keyword id="KW-0328">Glycosyltransferase</keyword>
<keyword id="KW-0479">Metal-binding</keyword>
<keyword id="KW-0964">Secreted</keyword>
<keyword id="KW-0732">Signal</keyword>
<keyword id="KW-0808">Transferase</keyword>
<protein>
    <recommendedName>
        <fullName>Cyclomaltodextrin glucanotransferase</fullName>
        <ecNumber>2.4.1.19</ecNumber>
    </recommendedName>
    <alternativeName>
        <fullName>Cyclodextrin-glycosyltransferase</fullName>
        <shortName>CGTase</shortName>
    </alternativeName>
</protein>
<evidence type="ECO:0000250" key="1"/>
<evidence type="ECO:0000255" key="2">
    <source>
        <dbReference type="PROSITE-ProRule" id="PRU00594"/>
    </source>
</evidence>
<evidence type="ECO:0000269" key="3">
    <source>
    </source>
</evidence>
<evidence type="ECO:0000269" key="4">
    <source>
    </source>
</evidence>
<evidence type="ECO:0000269" key="5">
    <source>
    </source>
</evidence>
<evidence type="ECO:0000269" key="6">
    <source>
    </source>
</evidence>
<evidence type="ECO:0000305" key="7"/>
<evidence type="ECO:0007829" key="8">
    <source>
        <dbReference type="PDB" id="1CXL"/>
    </source>
</evidence>
<evidence type="ECO:0007829" key="9">
    <source>
        <dbReference type="PDB" id="1D3C"/>
    </source>
</evidence>
<evidence type="ECO:0007829" key="10">
    <source>
        <dbReference type="PDB" id="1EO7"/>
    </source>
</evidence>
<evidence type="ECO:0007829" key="11">
    <source>
        <dbReference type="PDB" id="1KCL"/>
    </source>
</evidence>
<evidence type="ECO:0007829" key="12">
    <source>
        <dbReference type="PDB" id="1OT1"/>
    </source>
</evidence>
<evidence type="ECO:0007829" key="13">
    <source>
        <dbReference type="PDB" id="1TCM"/>
    </source>
</evidence>
<gene>
    <name type="primary">cgt</name>
</gene>
<reference key="1">
    <citation type="journal article" date="1994" name="J. Mol. Biol.">
        <title>Nucleotide sequence and X-ray structure of cyclodextrin glycosyltransferase from Bacillus circulans strain 251 in a maltose-dependent crystal form.</title>
        <authorList>
            <person name="Lawson C.L."/>
            <person name="van Montfort R."/>
            <person name="Strokopytov B."/>
            <person name="Rozeboom H.J."/>
            <person name="Kalk K.H."/>
            <person name="de Vries G.E."/>
            <person name="Penninga D."/>
            <person name="Dijkhuizen L."/>
            <person name="Dijkstra B.W."/>
        </authorList>
    </citation>
    <scope>NUCLEOTIDE SEQUENCE [GENOMIC DNA]</scope>
    <scope>PROTEIN SEQUENCE OF 28-37</scope>
    <scope>X-RAY CRYSTALLOGRAPHY (2.0 ANGSTROMS)</scope>
    <source>
        <strain>251</strain>
    </source>
</reference>
<reference key="2">
    <citation type="journal article" date="1995" name="Biochemistry">
        <title>X-ray structure of cyclodextrin glycosyltransferase complexed with acarbose. Implications for the catalytic mechanism of glycosidases.</title>
        <authorList>
            <person name="Strokopytov B."/>
            <person name="Penninga D."/>
            <person name="Rozeboom H.J."/>
            <person name="Kalk K.H."/>
            <person name="Dijkhuizen L."/>
            <person name="Dijkstra B.W."/>
        </authorList>
    </citation>
    <scope>X-RAY CRYSTALLOGRAPHY (2.5 ANGSTROMS) OF 28-713 IN COMPLEX WITH ACARBOSE</scope>
</reference>
<reference key="3">
    <citation type="journal article" date="1995" name="J. Biol. Chem.">
        <title>Crystallographic studies of the interaction of cyclodextrin glycosyltransferase from Bacillus circulans strain 251 with natural substrates and products.</title>
        <authorList>
            <person name="Knegtel R.M.A."/>
            <person name="Strokopytov B."/>
            <person name="Penninga D."/>
            <person name="Faber O.G."/>
            <person name="Rozeboom H.J."/>
            <person name="Kalk K.H."/>
            <person name="Dijkhuizen L."/>
            <person name="Dijkstra B.W."/>
        </authorList>
    </citation>
    <scope>X-RAY CRYSTALLOGRAPHY (2.1 ANGSTROMS) OF MUTANT ASN-256/GLN-284</scope>
    <scope>ACTIVE SITE</scope>
    <scope>CATALYTIC ACTIVITY</scope>
    <scope>MUTAGENESIS OF ASP-256; GLU-284 AND ASP-355</scope>
    <source>
        <strain>251</strain>
    </source>
</reference>
<reference key="4">
    <citation type="journal article" date="1996" name="J. Biol. Chem.">
        <title>The raw starch binding domain of cyclodextrin glycosyltransferase from Bacillus circulans strain 251.</title>
        <authorList>
            <person name="Penninga D."/>
            <person name="van der Veen B.A."/>
            <person name="Knegtel R.M.A."/>
            <person name="van Hijum S.A.F.T."/>
            <person name="Rozeboom H.J."/>
            <person name="Kalk K.H."/>
            <person name="Dijkstra B.W."/>
            <person name="Dijkhuizen L."/>
        </authorList>
    </citation>
    <scope>X-RAY CRYSTALLOGRAPHY (2.2 ANGSTROMS)</scope>
</reference>
<reference key="5">
    <citation type="journal article" date="1996" name="Biochemistry">
        <title>Structure of cyclodextrin glycosyltransferase complexed with a maltononaose inhibitor at 2.6-A resolution. Implications for product specificity.</title>
        <authorList>
            <person name="Strokopytov B."/>
            <person name="Knegtel R.M.A."/>
            <person name="Penninga D."/>
            <person name="Rozeboom H.J."/>
            <person name="Kalk K.H."/>
            <person name="Dijkhuizen L."/>
            <person name="Dijkstra B.W."/>
        </authorList>
    </citation>
    <scope>X-RAY CRYSTALLOGRAPHY (2.6 ANGSTROMS) OF COMPLEX WITH INHIBITOR</scope>
    <source>
        <strain>251</strain>
    </source>
</reference>
<reference key="6">
    <citation type="journal article" date="1999" name="Nat. Struct. Biol.">
        <title>X-ray structures along the reaction pathway of cyclodextrin glycosyltransferase elucidate catalysis in the alpha-amylase family.</title>
        <authorList>
            <person name="Uitdehaag J.C."/>
            <person name="Mosi R."/>
            <person name="Kalk K.H."/>
            <person name="van der Veen B.A."/>
            <person name="Dijkhuizen L."/>
            <person name="Withers S.G."/>
            <person name="Dijkstra B.W."/>
        </authorList>
    </citation>
    <scope>X-RAY CRYSTALLOGRAPHY (1.81 ANGSTROMS) OF 28-713 OF MUTANT ASN-256/GLN-284 IN COMPLEXES WITH CALCIUM IONS AND MALTOTETRAOSE</scope>
    <scope>ACTIVE SITE</scope>
    <scope>DISULFIDE BOND</scope>
</reference>
<comment type="catalytic activity">
    <reaction evidence="4">
        <text>Cyclizes part of a (1-&gt;4)-alpha-D-glucan chain by formation of a (1-&gt;4)-alpha-D-glucosidic bond.</text>
        <dbReference type="EC" id="2.4.1.19"/>
    </reaction>
</comment>
<comment type="cofactor">
    <cofactor>
        <name>Ca(2+)</name>
        <dbReference type="ChEBI" id="CHEBI:29108"/>
    </cofactor>
    <text>Binds 3 Ca(2+) ions per subunit.</text>
</comment>
<comment type="subunit">
    <text evidence="5">Monomer.</text>
</comment>
<comment type="subcellular location">
    <subcellularLocation>
        <location evidence="1">Secreted</location>
    </subcellularLocation>
</comment>
<comment type="domain">
    <text>May consist of two protein domains: the one in the N-terminal side cleaves the alpha-1,4-glucosidic bond in starch, and the other in the C-terminal side catalyzes other activities, including the reconstitution of an alpha-1,4-glucosidic linkage for cyclizing the maltooligosaccharide produced.</text>
</comment>
<comment type="similarity">
    <text evidence="7">Belongs to the glycosyl hydrolase 13 family.</text>
</comment>
<feature type="signal peptide" evidence="6">
    <location>
        <begin position="1"/>
        <end position="27"/>
    </location>
</feature>
<feature type="chain" id="PRO_0000001431" description="Cyclomaltodextrin glucanotransferase">
    <location>
        <begin position="28"/>
        <end position="713"/>
    </location>
</feature>
<feature type="domain" description="IPT/TIG">
    <location>
        <begin position="526"/>
        <end position="607"/>
    </location>
</feature>
<feature type="domain" description="CBM20" evidence="2">
    <location>
        <begin position="608"/>
        <end position="713"/>
    </location>
</feature>
<feature type="region of interest" description="A1">
    <location>
        <begin position="28"/>
        <end position="165"/>
    </location>
</feature>
<feature type="region of interest" description="B">
    <location>
        <begin position="166"/>
        <end position="229"/>
    </location>
</feature>
<feature type="region of interest" description="A2">
    <location>
        <begin position="230"/>
        <end position="433"/>
    </location>
</feature>
<feature type="region of interest" description="C">
    <location>
        <begin position="434"/>
        <end position="522"/>
    </location>
</feature>
<feature type="region of interest" description="D">
    <location>
        <begin position="523"/>
        <end position="609"/>
    </location>
</feature>
<feature type="region of interest" description="E">
    <location>
        <begin position="610"/>
        <end position="713"/>
    </location>
</feature>
<feature type="active site" description="Nucleophile">
    <location>
        <position position="256"/>
    </location>
</feature>
<feature type="active site" description="Proton donor">
    <location>
        <position position="284"/>
    </location>
</feature>
<feature type="binding site">
    <location>
        <position position="54"/>
    </location>
    <ligand>
        <name>Ca(2+)</name>
        <dbReference type="ChEBI" id="CHEBI:29108"/>
        <label>1</label>
    </ligand>
</feature>
<feature type="binding site">
    <location>
        <position position="56"/>
    </location>
    <ligand>
        <name>Ca(2+)</name>
        <dbReference type="ChEBI" id="CHEBI:29108"/>
        <label>1</label>
    </ligand>
</feature>
<feature type="binding site">
    <location>
        <position position="59"/>
    </location>
    <ligand>
        <name>Ca(2+)</name>
        <dbReference type="ChEBI" id="CHEBI:29108"/>
        <label>1</label>
    </ligand>
</feature>
<feature type="binding site">
    <location>
        <position position="60"/>
    </location>
    <ligand>
        <name>Ca(2+)</name>
        <dbReference type="ChEBI" id="CHEBI:29108"/>
        <label>1</label>
    </ligand>
</feature>
<feature type="binding site">
    <location>
        <position position="78"/>
    </location>
    <ligand>
        <name>Ca(2+)</name>
        <dbReference type="ChEBI" id="CHEBI:29108"/>
        <label>1</label>
    </ligand>
</feature>
<feature type="binding site">
    <location>
        <position position="80"/>
    </location>
    <ligand>
        <name>Ca(2+)</name>
        <dbReference type="ChEBI" id="CHEBI:29108"/>
        <label>1</label>
    </ligand>
</feature>
<feature type="binding site">
    <location>
        <begin position="127"/>
        <end position="128"/>
    </location>
    <ligand>
        <name>substrate</name>
    </ligand>
</feature>
<feature type="binding site">
    <location>
        <position position="166"/>
    </location>
    <ligand>
        <name>Ca(2+)</name>
        <dbReference type="ChEBI" id="CHEBI:29108"/>
        <label>2</label>
    </ligand>
</feature>
<feature type="binding site">
    <location>
        <position position="167"/>
    </location>
    <ligand>
        <name>substrate</name>
    </ligand>
</feature>
<feature type="binding site">
    <location>
        <begin position="172"/>
        <end position="174"/>
    </location>
    <ligand>
        <name>substrate</name>
    </ligand>
</feature>
<feature type="binding site">
    <location>
        <position position="217"/>
    </location>
    <ligand>
        <name>Ca(2+)</name>
        <dbReference type="ChEBI" id="CHEBI:29108"/>
        <label>2</label>
    </ligand>
</feature>
<feature type="binding site">
    <location>
        <begin position="220"/>
        <end position="223"/>
    </location>
    <ligand>
        <name>substrate</name>
    </ligand>
</feature>
<feature type="binding site">
    <location>
        <position position="226"/>
    </location>
    <ligand>
        <name>Ca(2+)</name>
        <dbReference type="ChEBI" id="CHEBI:29108"/>
        <label>2</label>
    </ligand>
</feature>
<feature type="binding site">
    <location>
        <position position="254"/>
    </location>
    <ligand>
        <name>substrate</name>
    </ligand>
</feature>
<feature type="binding site">
    <location>
        <begin position="259"/>
        <end position="260"/>
    </location>
    <ligand>
        <name>substrate</name>
    </ligand>
</feature>
<feature type="binding site">
    <location>
        <position position="260"/>
    </location>
    <ligand>
        <name>Ca(2+)</name>
        <dbReference type="ChEBI" id="CHEBI:29108"/>
        <label>2</label>
    </ligand>
</feature>
<feature type="binding site">
    <location>
        <position position="342"/>
    </location>
    <ligand>
        <name>Ca(2+)</name>
        <dbReference type="ChEBI" id="CHEBI:29108"/>
        <label>3</label>
    </ligand>
</feature>
<feature type="binding site">
    <location>
        <position position="354"/>
    </location>
    <ligand>
        <name>substrate</name>
    </ligand>
</feature>
<feature type="binding site">
    <location>
        <position position="398"/>
    </location>
    <ligand>
        <name>substrate</name>
    </ligand>
</feature>
<feature type="binding site">
    <location>
        <position position="402"/>
    </location>
    <ligand>
        <name>substrate</name>
    </ligand>
</feature>
<feature type="binding site">
    <location>
        <position position="604"/>
    </location>
    <ligand>
        <name>Ca(2+)</name>
        <dbReference type="ChEBI" id="CHEBI:29108"/>
        <label>3</label>
    </ligand>
</feature>
<feature type="site" description="Transition state stabilizer" evidence="1">
    <location>
        <position position="355"/>
    </location>
</feature>
<feature type="disulfide bond" evidence="3">
    <location>
        <begin position="70"/>
        <end position="77"/>
    </location>
</feature>
<feature type="mutagenesis site" description="Reduces activity 23000-fold. Reduces activity 520000-fold; when associated with N-355." evidence="4">
    <original>D</original>
    <variation>N</variation>
    <location>
        <position position="256"/>
    </location>
</feature>
<feature type="mutagenesis site" description="Reduces activity 4100-fold." evidence="4">
    <original>E</original>
    <variation>Q</variation>
    <location>
        <position position="284"/>
    </location>
</feature>
<feature type="mutagenesis site" description="Reduces activity 56000-fold. Reduces activity 520000-fold; when associated with N-256." evidence="4">
    <original>D</original>
    <variation>N</variation>
    <location>
        <position position="355"/>
    </location>
</feature>
<feature type="strand" evidence="9">
    <location>
        <begin position="44"/>
        <end position="47"/>
    </location>
</feature>
<feature type="helix" evidence="9">
    <location>
        <begin position="49"/>
        <end position="51"/>
    </location>
</feature>
<feature type="helix" evidence="9">
    <location>
        <begin position="57"/>
        <end position="59"/>
    </location>
</feature>
<feature type="helix" evidence="9">
    <location>
        <begin position="63"/>
        <end position="65"/>
    </location>
</feature>
<feature type="helix" evidence="9">
    <location>
        <begin position="81"/>
        <end position="89"/>
    </location>
</feature>
<feature type="turn" evidence="9">
    <location>
        <begin position="90"/>
        <end position="97"/>
    </location>
</feature>
<feature type="strand" evidence="9">
    <location>
        <begin position="100"/>
        <end position="103"/>
    </location>
</feature>
<feature type="strand" evidence="9">
    <location>
        <begin position="107"/>
        <end position="109"/>
    </location>
</feature>
<feature type="strand" evidence="9">
    <location>
        <begin position="114"/>
        <end position="118"/>
    </location>
</feature>
<feature type="strand" evidence="8">
    <location>
        <begin position="119"/>
        <end position="121"/>
    </location>
</feature>
<feature type="helix" evidence="13">
    <location>
        <begin position="123"/>
        <end position="125"/>
    </location>
</feature>
<feature type="strand" evidence="9">
    <location>
        <begin position="128"/>
        <end position="135"/>
    </location>
</feature>
<feature type="turn" evidence="9">
    <location>
        <begin position="137"/>
        <end position="139"/>
    </location>
</feature>
<feature type="helix" evidence="9">
    <location>
        <begin position="142"/>
        <end position="154"/>
    </location>
</feature>
<feature type="strand" evidence="9">
    <location>
        <begin position="158"/>
        <end position="163"/>
    </location>
</feature>
<feature type="strand" evidence="9">
    <location>
        <begin position="167"/>
        <end position="170"/>
    </location>
</feature>
<feature type="turn" evidence="9">
    <location>
        <begin position="179"/>
        <end position="182"/>
    </location>
</feature>
<feature type="strand" evidence="9">
    <location>
        <begin position="184"/>
        <end position="186"/>
    </location>
</feature>
<feature type="strand" evidence="9">
    <location>
        <begin position="189"/>
        <end position="192"/>
    </location>
</feature>
<feature type="strand" evidence="9">
    <location>
        <begin position="210"/>
        <end position="212"/>
    </location>
</feature>
<feature type="helix" evidence="9">
    <location>
        <begin position="213"/>
        <end position="218"/>
    </location>
</feature>
<feature type="strand" evidence="9">
    <location>
        <begin position="219"/>
        <end position="221"/>
    </location>
</feature>
<feature type="strand" evidence="9">
    <location>
        <begin position="224"/>
        <end position="227"/>
    </location>
</feature>
<feature type="helix" evidence="9">
    <location>
        <begin position="232"/>
        <end position="247"/>
    </location>
</feature>
<feature type="strand" evidence="9">
    <location>
        <begin position="252"/>
        <end position="255"/>
    </location>
</feature>
<feature type="helix" evidence="9">
    <location>
        <begin position="258"/>
        <end position="260"/>
    </location>
</feature>
<feature type="helix" evidence="9">
    <location>
        <begin position="263"/>
        <end position="274"/>
    </location>
</feature>
<feature type="strand" evidence="9">
    <location>
        <begin position="280"/>
        <end position="283"/>
    </location>
</feature>
<feature type="helix" evidence="9">
    <location>
        <begin position="294"/>
        <end position="302"/>
    </location>
</feature>
<feature type="strand" evidence="9">
    <location>
        <begin position="303"/>
        <end position="308"/>
    </location>
</feature>
<feature type="helix" evidence="9">
    <location>
        <begin position="310"/>
        <end position="320"/>
    </location>
</feature>
<feature type="helix" evidence="9">
    <location>
        <begin position="327"/>
        <end position="340"/>
    </location>
</feature>
<feature type="helix" evidence="9">
    <location>
        <begin position="344"/>
        <end position="346"/>
    </location>
</feature>
<feature type="strand" evidence="11">
    <location>
        <begin position="347"/>
        <end position="349"/>
    </location>
</feature>
<feature type="strand" evidence="12">
    <location>
        <begin position="354"/>
        <end position="356"/>
    </location>
</feature>
<feature type="strand" evidence="13">
    <location>
        <begin position="362"/>
        <end position="364"/>
    </location>
</feature>
<feature type="helix" evidence="9">
    <location>
        <begin position="366"/>
        <end position="377"/>
    </location>
</feature>
<feature type="strand" evidence="9">
    <location>
        <begin position="379"/>
        <end position="386"/>
    </location>
</feature>
<feature type="helix" evidence="9">
    <location>
        <begin position="389"/>
        <end position="391"/>
    </location>
</feature>
<feature type="helix" evidence="9">
    <location>
        <begin position="400"/>
        <end position="402"/>
    </location>
</feature>
<feature type="helix" evidence="9">
    <location>
        <begin position="413"/>
        <end position="421"/>
    </location>
</feature>
<feature type="helix" evidence="9">
    <location>
        <begin position="424"/>
        <end position="427"/>
    </location>
</feature>
<feature type="helix" evidence="9">
    <location>
        <begin position="429"/>
        <end position="433"/>
    </location>
</feature>
<feature type="strand" evidence="9">
    <location>
        <begin position="435"/>
        <end position="441"/>
    </location>
</feature>
<feature type="strand" evidence="9">
    <location>
        <begin position="443"/>
        <end position="451"/>
    </location>
</feature>
<feature type="strand" evidence="9">
    <location>
        <begin position="453"/>
        <end position="462"/>
    </location>
</feature>
<feature type="strand" evidence="9">
    <location>
        <begin position="469"/>
        <end position="471"/>
    </location>
</feature>
<feature type="strand" evidence="10">
    <location>
        <begin position="473"/>
        <end position="475"/>
    </location>
</feature>
<feature type="strand" evidence="9">
    <location>
        <begin position="480"/>
        <end position="483"/>
    </location>
</feature>
<feature type="turn" evidence="9">
    <location>
        <begin position="486"/>
        <end position="491"/>
    </location>
</feature>
<feature type="strand" evidence="9">
    <location>
        <begin position="496"/>
        <end position="498"/>
    </location>
</feature>
<feature type="helix" evidence="9">
    <location>
        <begin position="500"/>
        <end position="502"/>
    </location>
</feature>
<feature type="strand" evidence="9">
    <location>
        <begin position="507"/>
        <end position="509"/>
    </location>
</feature>
<feature type="strand" evidence="9">
    <location>
        <begin position="514"/>
        <end position="520"/>
    </location>
</feature>
<feature type="strand" evidence="9">
    <location>
        <begin position="527"/>
        <end position="532"/>
    </location>
</feature>
<feature type="strand" evidence="9">
    <location>
        <begin position="534"/>
        <end position="536"/>
    </location>
</feature>
<feature type="strand" evidence="9">
    <location>
        <begin position="541"/>
        <end position="547"/>
    </location>
</feature>
<feature type="strand" evidence="9">
    <location>
        <begin position="555"/>
        <end position="558"/>
    </location>
</feature>
<feature type="strand" evidence="9">
    <location>
        <begin position="561"/>
        <end position="563"/>
    </location>
</feature>
<feature type="helix" evidence="9">
    <location>
        <begin position="565"/>
        <end position="567"/>
    </location>
</feature>
<feature type="strand" evidence="9">
    <location>
        <begin position="568"/>
        <end position="571"/>
    </location>
</feature>
<feature type="strand" evidence="9">
    <location>
        <begin position="573"/>
        <end position="579"/>
    </location>
</feature>
<feature type="strand" evidence="9">
    <location>
        <begin position="585"/>
        <end position="593"/>
    </location>
</feature>
<feature type="strand" evidence="9">
    <location>
        <begin position="603"/>
        <end position="608"/>
    </location>
</feature>
<feature type="strand" evidence="9">
    <location>
        <begin position="610"/>
        <end position="621"/>
    </location>
</feature>
<feature type="strand" evidence="9">
    <location>
        <begin position="630"/>
        <end position="637"/>
    </location>
</feature>
<feature type="helix" evidence="9">
    <location>
        <begin position="638"/>
        <end position="640"/>
    </location>
</feature>
<feature type="turn" evidence="9">
    <location>
        <begin position="641"/>
        <end position="643"/>
    </location>
</feature>
<feature type="helix" evidence="9">
    <location>
        <begin position="645"/>
        <end position="647"/>
    </location>
</feature>
<feature type="strand" evidence="9">
    <location>
        <begin position="655"/>
        <end position="658"/>
    </location>
</feature>
<feature type="strand" evidence="9">
    <location>
        <begin position="663"/>
        <end position="670"/>
    </location>
</feature>
<feature type="strand" evidence="9">
    <location>
        <begin position="674"/>
        <end position="683"/>
    </location>
</feature>
<feature type="strand" evidence="9">
    <location>
        <begin position="686"/>
        <end position="689"/>
    </location>
</feature>
<feature type="strand" evidence="13">
    <location>
        <begin position="691"/>
        <end position="693"/>
    </location>
</feature>
<feature type="strand" evidence="9">
    <location>
        <begin position="695"/>
        <end position="698"/>
    </location>
</feature>
<feature type="strand" evidence="9">
    <location>
        <begin position="701"/>
        <end position="703"/>
    </location>
</feature>
<feature type="strand" evidence="9">
    <location>
        <begin position="705"/>
        <end position="710"/>
    </location>
</feature>